<comment type="similarity">
    <text evidence="1">Belongs to the bacterial ribosomal protein bL33 family.</text>
</comment>
<keyword id="KW-1185">Reference proteome</keyword>
<keyword id="KW-0687">Ribonucleoprotein</keyword>
<keyword id="KW-0689">Ribosomal protein</keyword>
<organism>
    <name type="scientific">Geobacillus kaustophilus (strain HTA426)</name>
    <dbReference type="NCBI Taxonomy" id="235909"/>
    <lineage>
        <taxon>Bacteria</taxon>
        <taxon>Bacillati</taxon>
        <taxon>Bacillota</taxon>
        <taxon>Bacilli</taxon>
        <taxon>Bacillales</taxon>
        <taxon>Anoxybacillaceae</taxon>
        <taxon>Geobacillus</taxon>
        <taxon>Geobacillus thermoleovorans group</taxon>
    </lineage>
</organism>
<proteinExistence type="inferred from homology"/>
<evidence type="ECO:0000255" key="1">
    <source>
        <dbReference type="HAMAP-Rule" id="MF_00294"/>
    </source>
</evidence>
<reference key="1">
    <citation type="journal article" date="2004" name="Nucleic Acids Res.">
        <title>Thermoadaptation trait revealed by the genome sequence of thermophilic Geobacillus kaustophilus.</title>
        <authorList>
            <person name="Takami H."/>
            <person name="Takaki Y."/>
            <person name="Chee G.-J."/>
            <person name="Nishi S."/>
            <person name="Shimamura S."/>
            <person name="Suzuki H."/>
            <person name="Matsui S."/>
            <person name="Uchiyama I."/>
        </authorList>
    </citation>
    <scope>NUCLEOTIDE SEQUENCE [LARGE SCALE GENOMIC DNA]</scope>
    <source>
        <strain>HTA426</strain>
    </source>
</reference>
<sequence length="49" mass="5697">MRQKVTLACVQCASRNYTAAKQIRRLGERLMANKFCSTCNKHTIHRETK</sequence>
<accession>Q5L424</accession>
<gene>
    <name evidence="1" type="primary">rpmG1</name>
    <name type="ordered locus">GK0090</name>
</gene>
<dbReference type="EMBL" id="BA000043">
    <property type="protein sequence ID" value="BAD74375.1"/>
    <property type="molecule type" value="Genomic_DNA"/>
</dbReference>
<dbReference type="SMR" id="Q5L424"/>
<dbReference type="STRING" id="235909.GK0090"/>
<dbReference type="KEGG" id="gka:GK0090"/>
<dbReference type="eggNOG" id="COG0267">
    <property type="taxonomic scope" value="Bacteria"/>
</dbReference>
<dbReference type="HOGENOM" id="CLU_190949_0_2_9"/>
<dbReference type="Proteomes" id="UP000001172">
    <property type="component" value="Chromosome"/>
</dbReference>
<dbReference type="GO" id="GO:0005737">
    <property type="term" value="C:cytoplasm"/>
    <property type="evidence" value="ECO:0007669"/>
    <property type="project" value="UniProtKB-ARBA"/>
</dbReference>
<dbReference type="GO" id="GO:1990904">
    <property type="term" value="C:ribonucleoprotein complex"/>
    <property type="evidence" value="ECO:0007669"/>
    <property type="project" value="UniProtKB-KW"/>
</dbReference>
<dbReference type="GO" id="GO:0005840">
    <property type="term" value="C:ribosome"/>
    <property type="evidence" value="ECO:0007669"/>
    <property type="project" value="UniProtKB-KW"/>
</dbReference>
<dbReference type="GO" id="GO:0003735">
    <property type="term" value="F:structural constituent of ribosome"/>
    <property type="evidence" value="ECO:0007669"/>
    <property type="project" value="InterPro"/>
</dbReference>
<dbReference type="GO" id="GO:0006412">
    <property type="term" value="P:translation"/>
    <property type="evidence" value="ECO:0007669"/>
    <property type="project" value="UniProtKB-UniRule"/>
</dbReference>
<dbReference type="Gene3D" id="2.20.28.120">
    <property type="entry name" value="Ribosomal protein L33"/>
    <property type="match status" value="1"/>
</dbReference>
<dbReference type="HAMAP" id="MF_00294">
    <property type="entry name" value="Ribosomal_bL33"/>
    <property type="match status" value="1"/>
</dbReference>
<dbReference type="InterPro" id="IPR001705">
    <property type="entry name" value="Ribosomal_bL33"/>
</dbReference>
<dbReference type="InterPro" id="IPR038584">
    <property type="entry name" value="Ribosomal_bL33_sf"/>
</dbReference>
<dbReference type="InterPro" id="IPR011332">
    <property type="entry name" value="Ribosomal_zn-bd"/>
</dbReference>
<dbReference type="NCBIfam" id="NF001764">
    <property type="entry name" value="PRK00504.1"/>
    <property type="match status" value="1"/>
</dbReference>
<dbReference type="NCBIfam" id="NF001860">
    <property type="entry name" value="PRK00595.1"/>
    <property type="match status" value="1"/>
</dbReference>
<dbReference type="NCBIfam" id="TIGR01023">
    <property type="entry name" value="rpmG_bact"/>
    <property type="match status" value="1"/>
</dbReference>
<dbReference type="Pfam" id="PF00471">
    <property type="entry name" value="Ribosomal_L33"/>
    <property type="match status" value="1"/>
</dbReference>
<dbReference type="SUPFAM" id="SSF57829">
    <property type="entry name" value="Zn-binding ribosomal proteins"/>
    <property type="match status" value="1"/>
</dbReference>
<name>RL331_GEOKA</name>
<protein>
    <recommendedName>
        <fullName evidence="1">Large ribosomal subunit protein bL33A</fullName>
    </recommendedName>
    <alternativeName>
        <fullName evidence="1">50S ribosomal protein L33 1</fullName>
    </alternativeName>
</protein>
<feature type="chain" id="PRO_0000356471" description="Large ribosomal subunit protein bL33A">
    <location>
        <begin position="1"/>
        <end position="49"/>
    </location>
</feature>